<keyword id="KW-0067">ATP-binding</keyword>
<keyword id="KW-0963">Cytoplasm</keyword>
<keyword id="KW-0418">Kinase</keyword>
<keyword id="KW-0547">Nucleotide-binding</keyword>
<keyword id="KW-1185">Reference proteome</keyword>
<keyword id="KW-0808">Transferase</keyword>
<gene>
    <name evidence="1" type="primary">gmk</name>
    <name type="ordered locus">CD630_25880</name>
</gene>
<comment type="function">
    <text evidence="1">Essential for recycling GMP and indirectly, cGMP.</text>
</comment>
<comment type="catalytic activity">
    <reaction evidence="1">
        <text>GMP + ATP = GDP + ADP</text>
        <dbReference type="Rhea" id="RHEA:20780"/>
        <dbReference type="ChEBI" id="CHEBI:30616"/>
        <dbReference type="ChEBI" id="CHEBI:58115"/>
        <dbReference type="ChEBI" id="CHEBI:58189"/>
        <dbReference type="ChEBI" id="CHEBI:456216"/>
        <dbReference type="EC" id="2.7.4.8"/>
    </reaction>
</comment>
<comment type="subcellular location">
    <subcellularLocation>
        <location evidence="1">Cytoplasm</location>
    </subcellularLocation>
</comment>
<comment type="similarity">
    <text evidence="1">Belongs to the guanylate kinase family.</text>
</comment>
<sequence>MFVKKGLLLVVSGPSGAGKGTICKELLKENDTIKLSVSATTRKPRTGEVDGVNYFFISKEKFEEMIEKGEFLEYAQIYDNFYGTPKAAIMECLEKGQDVLLEIEMQGAKQIKEVCPEGVFIFVLPPSLEELKNRIVGRGTETEAEIEKRFSCAYEEIKMIKDYDYFIFNEDVKTSAKEIEGIISSEKNKVSRYKNIIIEKFKEEL</sequence>
<evidence type="ECO:0000255" key="1">
    <source>
        <dbReference type="HAMAP-Rule" id="MF_00328"/>
    </source>
</evidence>
<accession>Q182S8</accession>
<proteinExistence type="inferred from homology"/>
<feature type="chain" id="PRO_0000266307" description="Guanylate kinase">
    <location>
        <begin position="1"/>
        <end position="205"/>
    </location>
</feature>
<feature type="domain" description="Guanylate kinase-like" evidence="1">
    <location>
        <begin position="6"/>
        <end position="184"/>
    </location>
</feature>
<feature type="binding site" evidence="1">
    <location>
        <begin position="13"/>
        <end position="20"/>
    </location>
    <ligand>
        <name>ATP</name>
        <dbReference type="ChEBI" id="CHEBI:30616"/>
    </ligand>
</feature>
<protein>
    <recommendedName>
        <fullName evidence="1">Guanylate kinase</fullName>
        <ecNumber evidence="1">2.7.4.8</ecNumber>
    </recommendedName>
    <alternativeName>
        <fullName evidence="1">GMP kinase</fullName>
    </alternativeName>
</protein>
<reference key="1">
    <citation type="journal article" date="2006" name="Nat. Genet.">
        <title>The multidrug-resistant human pathogen Clostridium difficile has a highly mobile, mosaic genome.</title>
        <authorList>
            <person name="Sebaihia M."/>
            <person name="Wren B.W."/>
            <person name="Mullany P."/>
            <person name="Fairweather N.F."/>
            <person name="Minton N."/>
            <person name="Stabler R."/>
            <person name="Thomson N.R."/>
            <person name="Roberts A.P."/>
            <person name="Cerdeno-Tarraga A.M."/>
            <person name="Wang H."/>
            <person name="Holden M.T.G."/>
            <person name="Wright A."/>
            <person name="Churcher C."/>
            <person name="Quail M.A."/>
            <person name="Baker S."/>
            <person name="Bason N."/>
            <person name="Brooks K."/>
            <person name="Chillingworth T."/>
            <person name="Cronin A."/>
            <person name="Davis P."/>
            <person name="Dowd L."/>
            <person name="Fraser A."/>
            <person name="Feltwell T."/>
            <person name="Hance Z."/>
            <person name="Holroyd S."/>
            <person name="Jagels K."/>
            <person name="Moule S."/>
            <person name="Mungall K."/>
            <person name="Price C."/>
            <person name="Rabbinowitsch E."/>
            <person name="Sharp S."/>
            <person name="Simmonds M."/>
            <person name="Stevens K."/>
            <person name="Unwin L."/>
            <person name="Whithead S."/>
            <person name="Dupuy B."/>
            <person name="Dougan G."/>
            <person name="Barrell B."/>
            <person name="Parkhill J."/>
        </authorList>
    </citation>
    <scope>NUCLEOTIDE SEQUENCE [LARGE SCALE GENOMIC DNA]</scope>
    <source>
        <strain>630</strain>
    </source>
</reference>
<dbReference type="EC" id="2.7.4.8" evidence="1"/>
<dbReference type="EMBL" id="AM180355">
    <property type="protein sequence ID" value="CAJ69478.1"/>
    <property type="molecule type" value="Genomic_DNA"/>
</dbReference>
<dbReference type="RefSeq" id="WP_003431170.1">
    <property type="nucleotide sequence ID" value="NZ_JAUPES010000012.1"/>
</dbReference>
<dbReference type="RefSeq" id="YP_001089105.1">
    <property type="nucleotide sequence ID" value="NC_009089.1"/>
</dbReference>
<dbReference type="SMR" id="Q182S8"/>
<dbReference type="STRING" id="272563.CD630_25880"/>
<dbReference type="EnsemblBacteria" id="CAJ69478">
    <property type="protein sequence ID" value="CAJ69478"/>
    <property type="gene ID" value="CD630_25880"/>
</dbReference>
<dbReference type="KEGG" id="cdf:CD630_25880"/>
<dbReference type="KEGG" id="pdc:CDIF630_02842"/>
<dbReference type="PATRIC" id="fig|272563.120.peg.2730"/>
<dbReference type="eggNOG" id="COG0194">
    <property type="taxonomic scope" value="Bacteria"/>
</dbReference>
<dbReference type="OrthoDB" id="9808150at2"/>
<dbReference type="PhylomeDB" id="Q182S8"/>
<dbReference type="BioCyc" id="PDIF272563:G12WB-2745-MONOMER"/>
<dbReference type="Proteomes" id="UP000001978">
    <property type="component" value="Chromosome"/>
</dbReference>
<dbReference type="GO" id="GO:0005829">
    <property type="term" value="C:cytosol"/>
    <property type="evidence" value="ECO:0007669"/>
    <property type="project" value="TreeGrafter"/>
</dbReference>
<dbReference type="GO" id="GO:0005524">
    <property type="term" value="F:ATP binding"/>
    <property type="evidence" value="ECO:0007669"/>
    <property type="project" value="UniProtKB-UniRule"/>
</dbReference>
<dbReference type="GO" id="GO:0004385">
    <property type="term" value="F:guanylate kinase activity"/>
    <property type="evidence" value="ECO:0007669"/>
    <property type="project" value="UniProtKB-UniRule"/>
</dbReference>
<dbReference type="CDD" id="cd00071">
    <property type="entry name" value="GMPK"/>
    <property type="match status" value="1"/>
</dbReference>
<dbReference type="FunFam" id="3.40.50.300:FF:000855">
    <property type="entry name" value="Guanylate kinase"/>
    <property type="match status" value="1"/>
</dbReference>
<dbReference type="FunFam" id="3.30.63.10:FF:000002">
    <property type="entry name" value="Guanylate kinase 1"/>
    <property type="match status" value="1"/>
</dbReference>
<dbReference type="Gene3D" id="3.30.63.10">
    <property type="entry name" value="Guanylate Kinase phosphate binding domain"/>
    <property type="match status" value="1"/>
</dbReference>
<dbReference type="Gene3D" id="3.40.50.300">
    <property type="entry name" value="P-loop containing nucleotide triphosphate hydrolases"/>
    <property type="match status" value="1"/>
</dbReference>
<dbReference type="HAMAP" id="MF_00328">
    <property type="entry name" value="Guanylate_kinase"/>
    <property type="match status" value="1"/>
</dbReference>
<dbReference type="InterPro" id="IPR008145">
    <property type="entry name" value="GK/Ca_channel_bsu"/>
</dbReference>
<dbReference type="InterPro" id="IPR008144">
    <property type="entry name" value="Guanylate_kin-like_dom"/>
</dbReference>
<dbReference type="InterPro" id="IPR017665">
    <property type="entry name" value="Guanylate_kinase"/>
</dbReference>
<dbReference type="InterPro" id="IPR020590">
    <property type="entry name" value="Guanylate_kinase_CS"/>
</dbReference>
<dbReference type="InterPro" id="IPR027417">
    <property type="entry name" value="P-loop_NTPase"/>
</dbReference>
<dbReference type="NCBIfam" id="TIGR03263">
    <property type="entry name" value="guanyl_kin"/>
    <property type="match status" value="1"/>
</dbReference>
<dbReference type="PANTHER" id="PTHR23117:SF13">
    <property type="entry name" value="GUANYLATE KINASE"/>
    <property type="match status" value="1"/>
</dbReference>
<dbReference type="PANTHER" id="PTHR23117">
    <property type="entry name" value="GUANYLATE KINASE-RELATED"/>
    <property type="match status" value="1"/>
</dbReference>
<dbReference type="Pfam" id="PF00625">
    <property type="entry name" value="Guanylate_kin"/>
    <property type="match status" value="1"/>
</dbReference>
<dbReference type="SMART" id="SM00072">
    <property type="entry name" value="GuKc"/>
    <property type="match status" value="1"/>
</dbReference>
<dbReference type="SUPFAM" id="SSF52540">
    <property type="entry name" value="P-loop containing nucleoside triphosphate hydrolases"/>
    <property type="match status" value="1"/>
</dbReference>
<dbReference type="PROSITE" id="PS00856">
    <property type="entry name" value="GUANYLATE_KINASE_1"/>
    <property type="match status" value="1"/>
</dbReference>
<dbReference type="PROSITE" id="PS50052">
    <property type="entry name" value="GUANYLATE_KINASE_2"/>
    <property type="match status" value="1"/>
</dbReference>
<name>KGUA_CLOD6</name>
<organism>
    <name type="scientific">Clostridioides difficile (strain 630)</name>
    <name type="common">Peptoclostridium difficile</name>
    <dbReference type="NCBI Taxonomy" id="272563"/>
    <lineage>
        <taxon>Bacteria</taxon>
        <taxon>Bacillati</taxon>
        <taxon>Bacillota</taxon>
        <taxon>Clostridia</taxon>
        <taxon>Peptostreptococcales</taxon>
        <taxon>Peptostreptococcaceae</taxon>
        <taxon>Clostridioides</taxon>
    </lineage>
</organism>